<protein>
    <recommendedName>
        <fullName evidence="1">Alanine--tRNA ligase</fullName>
        <ecNumber evidence="1">6.1.1.7</ecNumber>
    </recommendedName>
    <alternativeName>
        <fullName evidence="1">Alanyl-tRNA synthetase</fullName>
        <shortName evidence="1">AlaRS</shortName>
    </alternativeName>
</protein>
<evidence type="ECO:0000255" key="1">
    <source>
        <dbReference type="HAMAP-Rule" id="MF_00036"/>
    </source>
</evidence>
<evidence type="ECO:0000256" key="2">
    <source>
        <dbReference type="SAM" id="MobiDB-lite"/>
    </source>
</evidence>
<feature type="chain" id="PRO_0000347554" description="Alanine--tRNA ligase">
    <location>
        <begin position="1"/>
        <end position="868"/>
    </location>
</feature>
<feature type="region of interest" description="Disordered" evidence="2">
    <location>
        <begin position="831"/>
        <end position="851"/>
    </location>
</feature>
<feature type="binding site" evidence="1">
    <location>
        <position position="553"/>
    </location>
    <ligand>
        <name>Zn(2+)</name>
        <dbReference type="ChEBI" id="CHEBI:29105"/>
    </ligand>
</feature>
<feature type="binding site" evidence="1">
    <location>
        <position position="557"/>
    </location>
    <ligand>
        <name>Zn(2+)</name>
        <dbReference type="ChEBI" id="CHEBI:29105"/>
    </ligand>
</feature>
<feature type="binding site" evidence="1">
    <location>
        <position position="657"/>
    </location>
    <ligand>
        <name>Zn(2+)</name>
        <dbReference type="ChEBI" id="CHEBI:29105"/>
    </ligand>
</feature>
<feature type="binding site" evidence="1">
    <location>
        <position position="661"/>
    </location>
    <ligand>
        <name>Zn(2+)</name>
        <dbReference type="ChEBI" id="CHEBI:29105"/>
    </ligand>
</feature>
<dbReference type="EC" id="6.1.1.7" evidence="1"/>
<dbReference type="EMBL" id="CP000285">
    <property type="protein sequence ID" value="ABE57987.1"/>
    <property type="molecule type" value="Genomic_DNA"/>
</dbReference>
<dbReference type="RefSeq" id="WP_011505933.1">
    <property type="nucleotide sequence ID" value="NC_007963.1"/>
</dbReference>
<dbReference type="SMR" id="Q1QZX1"/>
<dbReference type="STRING" id="290398.Csal_0625"/>
<dbReference type="GeneID" id="95333380"/>
<dbReference type="KEGG" id="csa:Csal_0625"/>
<dbReference type="eggNOG" id="COG0013">
    <property type="taxonomic scope" value="Bacteria"/>
</dbReference>
<dbReference type="HOGENOM" id="CLU_004485_1_1_6"/>
<dbReference type="OrthoDB" id="9803884at2"/>
<dbReference type="Proteomes" id="UP000000239">
    <property type="component" value="Chromosome"/>
</dbReference>
<dbReference type="GO" id="GO:0005829">
    <property type="term" value="C:cytosol"/>
    <property type="evidence" value="ECO:0007669"/>
    <property type="project" value="TreeGrafter"/>
</dbReference>
<dbReference type="GO" id="GO:0004813">
    <property type="term" value="F:alanine-tRNA ligase activity"/>
    <property type="evidence" value="ECO:0007669"/>
    <property type="project" value="UniProtKB-UniRule"/>
</dbReference>
<dbReference type="GO" id="GO:0002161">
    <property type="term" value="F:aminoacyl-tRNA deacylase activity"/>
    <property type="evidence" value="ECO:0007669"/>
    <property type="project" value="TreeGrafter"/>
</dbReference>
<dbReference type="GO" id="GO:0005524">
    <property type="term" value="F:ATP binding"/>
    <property type="evidence" value="ECO:0007669"/>
    <property type="project" value="UniProtKB-UniRule"/>
</dbReference>
<dbReference type="GO" id="GO:0000049">
    <property type="term" value="F:tRNA binding"/>
    <property type="evidence" value="ECO:0007669"/>
    <property type="project" value="UniProtKB-KW"/>
</dbReference>
<dbReference type="GO" id="GO:0008270">
    <property type="term" value="F:zinc ion binding"/>
    <property type="evidence" value="ECO:0007669"/>
    <property type="project" value="UniProtKB-UniRule"/>
</dbReference>
<dbReference type="GO" id="GO:0006419">
    <property type="term" value="P:alanyl-tRNA aminoacylation"/>
    <property type="evidence" value="ECO:0007669"/>
    <property type="project" value="UniProtKB-UniRule"/>
</dbReference>
<dbReference type="GO" id="GO:0045892">
    <property type="term" value="P:negative regulation of DNA-templated transcription"/>
    <property type="evidence" value="ECO:0007669"/>
    <property type="project" value="TreeGrafter"/>
</dbReference>
<dbReference type="CDD" id="cd00673">
    <property type="entry name" value="AlaRS_core"/>
    <property type="match status" value="1"/>
</dbReference>
<dbReference type="FunFam" id="2.40.30.130:FF:000001">
    <property type="entry name" value="Alanine--tRNA ligase"/>
    <property type="match status" value="1"/>
</dbReference>
<dbReference type="FunFam" id="3.10.310.40:FF:000001">
    <property type="entry name" value="Alanine--tRNA ligase"/>
    <property type="match status" value="1"/>
</dbReference>
<dbReference type="FunFam" id="3.30.54.20:FF:000001">
    <property type="entry name" value="Alanine--tRNA ligase"/>
    <property type="match status" value="1"/>
</dbReference>
<dbReference type="FunFam" id="3.30.930.10:FF:000004">
    <property type="entry name" value="Alanine--tRNA ligase"/>
    <property type="match status" value="1"/>
</dbReference>
<dbReference type="FunFam" id="3.30.980.10:FF:000004">
    <property type="entry name" value="Alanine--tRNA ligase, cytoplasmic"/>
    <property type="match status" value="1"/>
</dbReference>
<dbReference type="Gene3D" id="2.40.30.130">
    <property type="match status" value="1"/>
</dbReference>
<dbReference type="Gene3D" id="3.10.310.40">
    <property type="match status" value="1"/>
</dbReference>
<dbReference type="Gene3D" id="3.30.54.20">
    <property type="match status" value="1"/>
</dbReference>
<dbReference type="Gene3D" id="6.10.250.550">
    <property type="match status" value="1"/>
</dbReference>
<dbReference type="Gene3D" id="3.30.930.10">
    <property type="entry name" value="Bira Bifunctional Protein, Domain 2"/>
    <property type="match status" value="1"/>
</dbReference>
<dbReference type="Gene3D" id="3.30.980.10">
    <property type="entry name" value="Threonyl-trna Synthetase, Chain A, domain 2"/>
    <property type="match status" value="1"/>
</dbReference>
<dbReference type="HAMAP" id="MF_00036_B">
    <property type="entry name" value="Ala_tRNA_synth_B"/>
    <property type="match status" value="1"/>
</dbReference>
<dbReference type="InterPro" id="IPR045864">
    <property type="entry name" value="aa-tRNA-synth_II/BPL/LPL"/>
</dbReference>
<dbReference type="InterPro" id="IPR002318">
    <property type="entry name" value="Ala-tRNA-lgiase_IIc"/>
</dbReference>
<dbReference type="InterPro" id="IPR018162">
    <property type="entry name" value="Ala-tRNA-ligase_IIc_anticod-bd"/>
</dbReference>
<dbReference type="InterPro" id="IPR018165">
    <property type="entry name" value="Ala-tRNA-synth_IIc_core"/>
</dbReference>
<dbReference type="InterPro" id="IPR018164">
    <property type="entry name" value="Ala-tRNA-synth_IIc_N"/>
</dbReference>
<dbReference type="InterPro" id="IPR050058">
    <property type="entry name" value="Ala-tRNA_ligase"/>
</dbReference>
<dbReference type="InterPro" id="IPR023033">
    <property type="entry name" value="Ala_tRNA_ligase_euk/bac"/>
</dbReference>
<dbReference type="InterPro" id="IPR003156">
    <property type="entry name" value="DHHA1_dom"/>
</dbReference>
<dbReference type="InterPro" id="IPR018163">
    <property type="entry name" value="Thr/Ala-tRNA-synth_IIc_edit"/>
</dbReference>
<dbReference type="InterPro" id="IPR009000">
    <property type="entry name" value="Transl_B-barrel_sf"/>
</dbReference>
<dbReference type="InterPro" id="IPR012947">
    <property type="entry name" value="tRNA_SAD"/>
</dbReference>
<dbReference type="NCBIfam" id="TIGR00344">
    <property type="entry name" value="alaS"/>
    <property type="match status" value="1"/>
</dbReference>
<dbReference type="PANTHER" id="PTHR11777:SF9">
    <property type="entry name" value="ALANINE--TRNA LIGASE, CYTOPLASMIC"/>
    <property type="match status" value="1"/>
</dbReference>
<dbReference type="PANTHER" id="PTHR11777">
    <property type="entry name" value="ALANYL-TRNA SYNTHETASE"/>
    <property type="match status" value="1"/>
</dbReference>
<dbReference type="Pfam" id="PF02272">
    <property type="entry name" value="DHHA1"/>
    <property type="match status" value="1"/>
</dbReference>
<dbReference type="Pfam" id="PF01411">
    <property type="entry name" value="tRNA-synt_2c"/>
    <property type="match status" value="1"/>
</dbReference>
<dbReference type="Pfam" id="PF07973">
    <property type="entry name" value="tRNA_SAD"/>
    <property type="match status" value="1"/>
</dbReference>
<dbReference type="PRINTS" id="PR00980">
    <property type="entry name" value="TRNASYNTHALA"/>
</dbReference>
<dbReference type="SMART" id="SM00863">
    <property type="entry name" value="tRNA_SAD"/>
    <property type="match status" value="1"/>
</dbReference>
<dbReference type="SUPFAM" id="SSF55681">
    <property type="entry name" value="Class II aaRS and biotin synthetases"/>
    <property type="match status" value="1"/>
</dbReference>
<dbReference type="SUPFAM" id="SSF101353">
    <property type="entry name" value="Putative anticodon-binding domain of alanyl-tRNA synthetase (AlaRS)"/>
    <property type="match status" value="1"/>
</dbReference>
<dbReference type="SUPFAM" id="SSF55186">
    <property type="entry name" value="ThrRS/AlaRS common domain"/>
    <property type="match status" value="1"/>
</dbReference>
<dbReference type="SUPFAM" id="SSF50447">
    <property type="entry name" value="Translation proteins"/>
    <property type="match status" value="1"/>
</dbReference>
<dbReference type="PROSITE" id="PS50860">
    <property type="entry name" value="AA_TRNA_LIGASE_II_ALA"/>
    <property type="match status" value="1"/>
</dbReference>
<proteinExistence type="inferred from homology"/>
<organism>
    <name type="scientific">Chromohalobacter salexigens (strain ATCC BAA-138 / DSM 3043 / CIP 106854 / NCIMB 13768 / 1H11)</name>
    <dbReference type="NCBI Taxonomy" id="290398"/>
    <lineage>
        <taxon>Bacteria</taxon>
        <taxon>Pseudomonadati</taxon>
        <taxon>Pseudomonadota</taxon>
        <taxon>Gammaproteobacteria</taxon>
        <taxon>Oceanospirillales</taxon>
        <taxon>Halomonadaceae</taxon>
        <taxon>Chromohalobacter</taxon>
    </lineage>
</organism>
<reference key="1">
    <citation type="journal article" date="2011" name="Stand. Genomic Sci.">
        <title>Complete genome sequence of the halophilic and highly halotolerant Chromohalobacter salexigens type strain (1H11(T)).</title>
        <authorList>
            <person name="Copeland A."/>
            <person name="O'Connor K."/>
            <person name="Lucas S."/>
            <person name="Lapidus A."/>
            <person name="Berry K.W."/>
            <person name="Detter J.C."/>
            <person name="Del Rio T.G."/>
            <person name="Hammon N."/>
            <person name="Dalin E."/>
            <person name="Tice H."/>
            <person name="Pitluck S."/>
            <person name="Bruce D."/>
            <person name="Goodwin L."/>
            <person name="Han C."/>
            <person name="Tapia R."/>
            <person name="Saunders E."/>
            <person name="Schmutz J."/>
            <person name="Brettin T."/>
            <person name="Larimer F."/>
            <person name="Land M."/>
            <person name="Hauser L."/>
            <person name="Vargas C."/>
            <person name="Nieto J.J."/>
            <person name="Kyrpides N.C."/>
            <person name="Ivanova N."/>
            <person name="Goker M."/>
            <person name="Klenk H.P."/>
            <person name="Csonka L.N."/>
            <person name="Woyke T."/>
        </authorList>
    </citation>
    <scope>NUCLEOTIDE SEQUENCE [LARGE SCALE GENOMIC DNA]</scope>
    <source>
        <strain>ATCC BAA-138 / DSM 3043 / CIP 106854 / NCIMB 13768 / 1H11</strain>
    </source>
</reference>
<accession>Q1QZX1</accession>
<comment type="function">
    <text evidence="1">Catalyzes the attachment of alanine to tRNA(Ala) in a two-step reaction: alanine is first activated by ATP to form Ala-AMP and then transferred to the acceptor end of tRNA(Ala). Also edits incorrectly charged Ser-tRNA(Ala) and Gly-tRNA(Ala) via its editing domain.</text>
</comment>
<comment type="catalytic activity">
    <reaction evidence="1">
        <text>tRNA(Ala) + L-alanine + ATP = L-alanyl-tRNA(Ala) + AMP + diphosphate</text>
        <dbReference type="Rhea" id="RHEA:12540"/>
        <dbReference type="Rhea" id="RHEA-COMP:9657"/>
        <dbReference type="Rhea" id="RHEA-COMP:9923"/>
        <dbReference type="ChEBI" id="CHEBI:30616"/>
        <dbReference type="ChEBI" id="CHEBI:33019"/>
        <dbReference type="ChEBI" id="CHEBI:57972"/>
        <dbReference type="ChEBI" id="CHEBI:78442"/>
        <dbReference type="ChEBI" id="CHEBI:78497"/>
        <dbReference type="ChEBI" id="CHEBI:456215"/>
        <dbReference type="EC" id="6.1.1.7"/>
    </reaction>
</comment>
<comment type="cofactor">
    <cofactor evidence="1">
        <name>Zn(2+)</name>
        <dbReference type="ChEBI" id="CHEBI:29105"/>
    </cofactor>
    <text evidence="1">Binds 1 zinc ion per subunit.</text>
</comment>
<comment type="subcellular location">
    <subcellularLocation>
        <location evidence="1">Cytoplasm</location>
    </subcellularLocation>
</comment>
<comment type="domain">
    <text evidence="1">Consists of three domains; the N-terminal catalytic domain, the editing domain and the C-terminal C-Ala domain. The editing domain removes incorrectly charged amino acids, while the C-Ala domain, along with tRNA(Ala), serves as a bridge to cooperatively bring together the editing and aminoacylation centers thus stimulating deacylation of misacylated tRNAs.</text>
</comment>
<comment type="similarity">
    <text evidence="1">Belongs to the class-II aminoacyl-tRNA synthetase family.</text>
</comment>
<keyword id="KW-0030">Aminoacyl-tRNA synthetase</keyword>
<keyword id="KW-0067">ATP-binding</keyword>
<keyword id="KW-0963">Cytoplasm</keyword>
<keyword id="KW-0436">Ligase</keyword>
<keyword id="KW-0479">Metal-binding</keyword>
<keyword id="KW-0547">Nucleotide-binding</keyword>
<keyword id="KW-0648">Protein biosynthesis</keyword>
<keyword id="KW-1185">Reference proteome</keyword>
<keyword id="KW-0694">RNA-binding</keyword>
<keyword id="KW-0820">tRNA-binding</keyword>
<keyword id="KW-0862">Zinc</keyword>
<sequence length="868" mass="94607">MKSADIRQAFLTFFEEHGHTIVPSSSLVPANDPTLLFTNAGMVPFKDVFLGRDPRPYVRATSAQRCVRAGGKHNDLDNVGYTARHHTFFEMLGNFSFGDYFKRGAIRFAWTFLTERLGLPADKLWVTVHVSDDEAERIWKDEIGIDPARFSKLDEDNFWQMGDTGPCGPSSEIFFDHGPEVAGGPPGSPEEDGDRYIEIWNLVFMQFDRDSAGTLNPLPKPSIDTGMGLERVAAVLQGVHSNYEIDLFQNLLNAASEATGYDDTSAPSLRVIADHIRSCAFLITDDVLPSNEGRGYVLRRIIRRAIRHGHKLGAREPFFHTLVAALDAEMGAAYPELRKARPRIEKVLLKEEEQFARTLDHGMGLLTEALETLDGEVLPGETVFKLYDTYGFPFDLTADVCRERGVTLDEVGFQRELEAQRERARAASQFGADYTAALDLEGETAFTGYERLEDEARVTALVDREGNALAALEAGQHGVVVLDRTPFYGESGGQAGDTGYLEADGMRFQVTDTQKQGGHHLHHGVLVEGRLDVGASVTPRVDASLRAATMRNHSATHLLHEALRQVLGEHVQQKGSLVTAERLRFDVSHFEAMTRAQLDEVERIVNAQILANAATRIEHMTLDEAKAKGAAALFEAKYADSVRVLTIGADDFSIELCGGTHVARSGDIGCFHILSEAGVAAGVRRIEAVTGEGALAYFRDQEAKVARVAEQLKAKPEQVEARLEATLERNRTLEKELERLKAKLASATSGDMLADVREVAGVKLLAKQVEGVGGKELRGLLDQLKNKLGSGVIVLGVAGDEKVSLIAGVTDDLTARLKAGDLVKHVAEQVGGKGGGRADMAQAGGSRPQALPDALASVPSWVEARLGE</sequence>
<name>SYA_CHRSD</name>
<gene>
    <name evidence="1" type="primary">alaS</name>
    <name type="ordered locus">Csal_0625</name>
</gene>